<comment type="subcellular location">
    <subcellularLocation>
        <location evidence="2">Cell membrane</location>
        <topology evidence="2">Multi-pass membrane protein</topology>
    </subcellularLocation>
</comment>
<evidence type="ECO:0000255" key="1"/>
<evidence type="ECO:0000305" key="2"/>
<reference key="1">
    <citation type="submission" date="1997-03" db="EMBL/GenBank/DDBJ databases">
        <title>A 148 kbp sequence of the region between 35 and 47 degree of the Bacillus subtilis genome.</title>
        <authorList>
            <person name="Kasahara Y."/>
            <person name="Nakai S."/>
            <person name="Lee S."/>
            <person name="Sadaie Y."/>
            <person name="Ogasawara N."/>
        </authorList>
    </citation>
    <scope>NUCLEOTIDE SEQUENCE [GENOMIC DNA]</scope>
    <source>
        <strain>168</strain>
    </source>
</reference>
<reference key="2">
    <citation type="journal article" date="1997" name="Nature">
        <title>The complete genome sequence of the Gram-positive bacterium Bacillus subtilis.</title>
        <authorList>
            <person name="Kunst F."/>
            <person name="Ogasawara N."/>
            <person name="Moszer I."/>
            <person name="Albertini A.M."/>
            <person name="Alloni G."/>
            <person name="Azevedo V."/>
            <person name="Bertero M.G."/>
            <person name="Bessieres P."/>
            <person name="Bolotin A."/>
            <person name="Borchert S."/>
            <person name="Borriss R."/>
            <person name="Boursier L."/>
            <person name="Brans A."/>
            <person name="Braun M."/>
            <person name="Brignell S.C."/>
            <person name="Bron S."/>
            <person name="Brouillet S."/>
            <person name="Bruschi C.V."/>
            <person name="Caldwell B."/>
            <person name="Capuano V."/>
            <person name="Carter N.M."/>
            <person name="Choi S.-K."/>
            <person name="Codani J.-J."/>
            <person name="Connerton I.F."/>
            <person name="Cummings N.J."/>
            <person name="Daniel R.A."/>
            <person name="Denizot F."/>
            <person name="Devine K.M."/>
            <person name="Duesterhoeft A."/>
            <person name="Ehrlich S.D."/>
            <person name="Emmerson P.T."/>
            <person name="Entian K.-D."/>
            <person name="Errington J."/>
            <person name="Fabret C."/>
            <person name="Ferrari E."/>
            <person name="Foulger D."/>
            <person name="Fritz C."/>
            <person name="Fujita M."/>
            <person name="Fujita Y."/>
            <person name="Fuma S."/>
            <person name="Galizzi A."/>
            <person name="Galleron N."/>
            <person name="Ghim S.-Y."/>
            <person name="Glaser P."/>
            <person name="Goffeau A."/>
            <person name="Golightly E.J."/>
            <person name="Grandi G."/>
            <person name="Guiseppi G."/>
            <person name="Guy B.J."/>
            <person name="Haga K."/>
            <person name="Haiech J."/>
            <person name="Harwood C.R."/>
            <person name="Henaut A."/>
            <person name="Hilbert H."/>
            <person name="Holsappel S."/>
            <person name="Hosono S."/>
            <person name="Hullo M.-F."/>
            <person name="Itaya M."/>
            <person name="Jones L.-M."/>
            <person name="Joris B."/>
            <person name="Karamata D."/>
            <person name="Kasahara Y."/>
            <person name="Klaerr-Blanchard M."/>
            <person name="Klein C."/>
            <person name="Kobayashi Y."/>
            <person name="Koetter P."/>
            <person name="Koningstein G."/>
            <person name="Krogh S."/>
            <person name="Kumano M."/>
            <person name="Kurita K."/>
            <person name="Lapidus A."/>
            <person name="Lardinois S."/>
            <person name="Lauber J."/>
            <person name="Lazarevic V."/>
            <person name="Lee S.-M."/>
            <person name="Levine A."/>
            <person name="Liu H."/>
            <person name="Masuda S."/>
            <person name="Mauel C."/>
            <person name="Medigue C."/>
            <person name="Medina N."/>
            <person name="Mellado R.P."/>
            <person name="Mizuno M."/>
            <person name="Moestl D."/>
            <person name="Nakai S."/>
            <person name="Noback M."/>
            <person name="Noone D."/>
            <person name="O'Reilly M."/>
            <person name="Ogawa K."/>
            <person name="Ogiwara A."/>
            <person name="Oudega B."/>
            <person name="Park S.-H."/>
            <person name="Parro V."/>
            <person name="Pohl T.M."/>
            <person name="Portetelle D."/>
            <person name="Porwollik S."/>
            <person name="Prescott A.M."/>
            <person name="Presecan E."/>
            <person name="Pujic P."/>
            <person name="Purnelle B."/>
            <person name="Rapoport G."/>
            <person name="Rey M."/>
            <person name="Reynolds S."/>
            <person name="Rieger M."/>
            <person name="Rivolta C."/>
            <person name="Rocha E."/>
            <person name="Roche B."/>
            <person name="Rose M."/>
            <person name="Sadaie Y."/>
            <person name="Sato T."/>
            <person name="Scanlan E."/>
            <person name="Schleich S."/>
            <person name="Schroeter R."/>
            <person name="Scoffone F."/>
            <person name="Sekiguchi J."/>
            <person name="Sekowska A."/>
            <person name="Seror S.J."/>
            <person name="Serror P."/>
            <person name="Shin B.-S."/>
            <person name="Soldo B."/>
            <person name="Sorokin A."/>
            <person name="Tacconi E."/>
            <person name="Takagi T."/>
            <person name="Takahashi H."/>
            <person name="Takemaru K."/>
            <person name="Takeuchi M."/>
            <person name="Tamakoshi A."/>
            <person name="Tanaka T."/>
            <person name="Terpstra P."/>
            <person name="Tognoni A."/>
            <person name="Tosato V."/>
            <person name="Uchiyama S."/>
            <person name="Vandenbol M."/>
            <person name="Vannier F."/>
            <person name="Vassarotti A."/>
            <person name="Viari A."/>
            <person name="Wambutt R."/>
            <person name="Wedler E."/>
            <person name="Wedler H."/>
            <person name="Weitzenegger T."/>
            <person name="Winters P."/>
            <person name="Wipat A."/>
            <person name="Yamamoto H."/>
            <person name="Yamane K."/>
            <person name="Yasumoto K."/>
            <person name="Yata K."/>
            <person name="Yoshida K."/>
            <person name="Yoshikawa H.-F."/>
            <person name="Zumstein E."/>
            <person name="Yoshikawa H."/>
            <person name="Danchin A."/>
        </authorList>
    </citation>
    <scope>NUCLEOTIDE SEQUENCE [LARGE SCALE GENOMIC DNA]</scope>
    <source>
        <strain>168</strain>
    </source>
</reference>
<sequence>MDFMNFFILGADLPTLGGVKGWASDVVIQFITIVVMFIAAKNLMKLKMGGIIFVCCIGSAVTWVIKHWSEFSGWINALMEKL</sequence>
<name>YDDC_BACSU</name>
<feature type="chain" id="PRO_0000049495" description="Uncharacterized protein YddC">
    <location>
        <begin position="1"/>
        <end position="82"/>
    </location>
</feature>
<feature type="transmembrane region" description="Helical" evidence="1">
    <location>
        <begin position="22"/>
        <end position="39"/>
    </location>
</feature>
<feature type="transmembrane region" description="Helical" evidence="1">
    <location>
        <begin position="46"/>
        <end position="65"/>
    </location>
</feature>
<keyword id="KW-1003">Cell membrane</keyword>
<keyword id="KW-0472">Membrane</keyword>
<keyword id="KW-1185">Reference proteome</keyword>
<keyword id="KW-0812">Transmembrane</keyword>
<keyword id="KW-1133">Transmembrane helix</keyword>
<dbReference type="EMBL" id="AB001488">
    <property type="protein sequence ID" value="BAA19329.1"/>
    <property type="molecule type" value="Genomic_DNA"/>
</dbReference>
<dbReference type="EMBL" id="AL009126">
    <property type="protein sequence ID" value="CAB12299.1"/>
    <property type="molecule type" value="Genomic_DNA"/>
</dbReference>
<dbReference type="PIR" id="D69775">
    <property type="entry name" value="D69775"/>
</dbReference>
<dbReference type="FunCoup" id="P96640">
    <property type="interactions" value="154"/>
</dbReference>
<dbReference type="STRING" id="224308.BSU04920"/>
<dbReference type="PaxDb" id="224308-BSU04920"/>
<dbReference type="EnsemblBacteria" id="CAB12299">
    <property type="protein sequence ID" value="CAB12299"/>
    <property type="gene ID" value="BSU_04920"/>
</dbReference>
<dbReference type="GeneID" id="938144"/>
<dbReference type="KEGG" id="bsu:BSU04920"/>
<dbReference type="PATRIC" id="fig|224308.179.peg.523"/>
<dbReference type="eggNOG" id="ENOG502ZRUB">
    <property type="taxonomic scope" value="Bacteria"/>
</dbReference>
<dbReference type="InParanoid" id="P96640"/>
<dbReference type="OrthoDB" id="2939882at2"/>
<dbReference type="BioCyc" id="BSUB:BSU04920-MONOMER"/>
<dbReference type="PRO" id="PR:P96640"/>
<dbReference type="Proteomes" id="UP000001570">
    <property type="component" value="Chromosome"/>
</dbReference>
<dbReference type="GO" id="GO:0005886">
    <property type="term" value="C:plasma membrane"/>
    <property type="evidence" value="ECO:0007669"/>
    <property type="project" value="UniProtKB-SubCell"/>
</dbReference>
<gene>
    <name type="primary">yddC</name>
    <name type="ordered locus">BSU04920</name>
</gene>
<proteinExistence type="predicted"/>
<organism>
    <name type="scientific">Bacillus subtilis (strain 168)</name>
    <dbReference type="NCBI Taxonomy" id="224308"/>
    <lineage>
        <taxon>Bacteria</taxon>
        <taxon>Bacillati</taxon>
        <taxon>Bacillota</taxon>
        <taxon>Bacilli</taxon>
        <taxon>Bacillales</taxon>
        <taxon>Bacillaceae</taxon>
        <taxon>Bacillus</taxon>
    </lineage>
</organism>
<accession>P96640</accession>
<protein>
    <recommendedName>
        <fullName>Uncharacterized protein YddC</fullName>
    </recommendedName>
</protein>